<sequence length="63" mass="7083">MTPSGIYLLPKIFVIFIFCGEPTVMLEVQIKTKLPENCTLATLNGIMKSCIVKVEASPRERRL</sequence>
<feature type="chain" id="PRO_0000128063" description="Uncharacterized protein AF_1848">
    <location>
        <begin position="1"/>
        <end position="63"/>
    </location>
</feature>
<gene>
    <name type="ordered locus">AF_1848</name>
</gene>
<proteinExistence type="predicted"/>
<name>Y1848_ARCFU</name>
<keyword id="KW-1185">Reference proteome</keyword>
<reference key="1">
    <citation type="journal article" date="1997" name="Nature">
        <title>The complete genome sequence of the hyperthermophilic, sulphate-reducing archaeon Archaeoglobus fulgidus.</title>
        <authorList>
            <person name="Klenk H.-P."/>
            <person name="Clayton R.A."/>
            <person name="Tomb J.-F."/>
            <person name="White O."/>
            <person name="Nelson K.E."/>
            <person name="Ketchum K.A."/>
            <person name="Dodson R.J."/>
            <person name="Gwinn M.L."/>
            <person name="Hickey E.K."/>
            <person name="Peterson J.D."/>
            <person name="Richardson D.L."/>
            <person name="Kerlavage A.R."/>
            <person name="Graham D.E."/>
            <person name="Kyrpides N.C."/>
            <person name="Fleischmann R.D."/>
            <person name="Quackenbush J."/>
            <person name="Lee N.H."/>
            <person name="Sutton G.G."/>
            <person name="Gill S.R."/>
            <person name="Kirkness E.F."/>
            <person name="Dougherty B.A."/>
            <person name="McKenney K."/>
            <person name="Adams M.D."/>
            <person name="Loftus B.J."/>
            <person name="Peterson S.N."/>
            <person name="Reich C.I."/>
            <person name="McNeil L.K."/>
            <person name="Badger J.H."/>
            <person name="Glodek A."/>
            <person name="Zhou L."/>
            <person name="Overbeek R."/>
            <person name="Gocayne J.D."/>
            <person name="Weidman J.F."/>
            <person name="McDonald L.A."/>
            <person name="Utterback T.R."/>
            <person name="Cotton M.D."/>
            <person name="Spriggs T."/>
            <person name="Artiach P."/>
            <person name="Kaine B.P."/>
            <person name="Sykes S.M."/>
            <person name="Sadow P.W."/>
            <person name="D'Andrea K.P."/>
            <person name="Bowman C."/>
            <person name="Fujii C."/>
            <person name="Garland S.A."/>
            <person name="Mason T.M."/>
            <person name="Olsen G.J."/>
            <person name="Fraser C.M."/>
            <person name="Smith H.O."/>
            <person name="Woese C.R."/>
            <person name="Venter J.C."/>
        </authorList>
    </citation>
    <scope>NUCLEOTIDE SEQUENCE [LARGE SCALE GENOMIC DNA]</scope>
    <source>
        <strain>ATCC 49558 / DSM 4304 / JCM 9628 / NBRC 100126 / VC-16</strain>
    </source>
</reference>
<accession>O28430</accession>
<dbReference type="EMBL" id="AE000782">
    <property type="protein sequence ID" value="AAB89408.1"/>
    <property type="molecule type" value="Genomic_DNA"/>
</dbReference>
<dbReference type="PIR" id="G69480">
    <property type="entry name" value="G69480"/>
</dbReference>
<dbReference type="STRING" id="224325.AF_1848"/>
<dbReference type="PaxDb" id="224325-AF_1848"/>
<dbReference type="EnsemblBacteria" id="AAB89408">
    <property type="protein sequence ID" value="AAB89408"/>
    <property type="gene ID" value="AF_1848"/>
</dbReference>
<dbReference type="KEGG" id="afu:AF_1848"/>
<dbReference type="HOGENOM" id="CLU_2874879_0_0_2"/>
<dbReference type="Proteomes" id="UP000002199">
    <property type="component" value="Chromosome"/>
</dbReference>
<organism>
    <name type="scientific">Archaeoglobus fulgidus (strain ATCC 49558 / DSM 4304 / JCM 9628 / NBRC 100126 / VC-16)</name>
    <dbReference type="NCBI Taxonomy" id="224325"/>
    <lineage>
        <taxon>Archaea</taxon>
        <taxon>Methanobacteriati</taxon>
        <taxon>Methanobacteriota</taxon>
        <taxon>Archaeoglobi</taxon>
        <taxon>Archaeoglobales</taxon>
        <taxon>Archaeoglobaceae</taxon>
        <taxon>Archaeoglobus</taxon>
    </lineage>
</organism>
<protein>
    <recommendedName>
        <fullName>Uncharacterized protein AF_1848</fullName>
    </recommendedName>
</protein>